<evidence type="ECO:0000255" key="1">
    <source>
        <dbReference type="HAMAP-Rule" id="MF_00815"/>
    </source>
</evidence>
<protein>
    <recommendedName>
        <fullName evidence="1">ATP synthase gamma chain</fullName>
    </recommendedName>
    <alternativeName>
        <fullName evidence="1">ATP synthase F1 sector gamma subunit</fullName>
    </alternativeName>
    <alternativeName>
        <fullName evidence="1">F-ATPase gamma subunit</fullName>
    </alternativeName>
</protein>
<sequence>MAGAGLIGIRRRIKSVTNIRKITKAMGLVSTAKLRKARVNLEINKKYYNEYKVILKDIINFIEDSNIYIDGNGSHKKLYVIFTSDSGLCGSFNINIINNVINEIKEDKENSLVIVIGQKGRMYLKKLGINTLAEYIEIPDVPTTKEARTIAKNIIKLYSSKEVGEVFLVYSEFYSPVKQQVLINKILPFTKENKSDNKYIEFNPPVTQFMDEILENYLKATILNCFSNSKASENGSRMTAMNGATDNANDLLDNLDLQFNRLRQSAITQEISEIVGGAEAQR</sequence>
<feature type="chain" id="PRO_1000053193" description="ATP synthase gamma chain">
    <location>
        <begin position="1"/>
        <end position="282"/>
    </location>
</feature>
<name>ATPG_CLOBL</name>
<dbReference type="EMBL" id="CP000728">
    <property type="protein sequence ID" value="ABS40283.1"/>
    <property type="molecule type" value="Genomic_DNA"/>
</dbReference>
<dbReference type="RefSeq" id="WP_011987240.1">
    <property type="nucleotide sequence ID" value="NC_009699.1"/>
</dbReference>
<dbReference type="SMR" id="A7G9Q8"/>
<dbReference type="KEGG" id="cbf:CLI_0210"/>
<dbReference type="HOGENOM" id="CLU_050669_0_1_9"/>
<dbReference type="Proteomes" id="UP000002410">
    <property type="component" value="Chromosome"/>
</dbReference>
<dbReference type="GO" id="GO:0005886">
    <property type="term" value="C:plasma membrane"/>
    <property type="evidence" value="ECO:0007669"/>
    <property type="project" value="UniProtKB-SubCell"/>
</dbReference>
<dbReference type="GO" id="GO:0045259">
    <property type="term" value="C:proton-transporting ATP synthase complex"/>
    <property type="evidence" value="ECO:0007669"/>
    <property type="project" value="UniProtKB-KW"/>
</dbReference>
<dbReference type="GO" id="GO:0005524">
    <property type="term" value="F:ATP binding"/>
    <property type="evidence" value="ECO:0007669"/>
    <property type="project" value="UniProtKB-UniRule"/>
</dbReference>
<dbReference type="GO" id="GO:0046933">
    <property type="term" value="F:proton-transporting ATP synthase activity, rotational mechanism"/>
    <property type="evidence" value="ECO:0007669"/>
    <property type="project" value="UniProtKB-UniRule"/>
</dbReference>
<dbReference type="GO" id="GO:0042777">
    <property type="term" value="P:proton motive force-driven plasma membrane ATP synthesis"/>
    <property type="evidence" value="ECO:0007669"/>
    <property type="project" value="UniProtKB-UniRule"/>
</dbReference>
<dbReference type="CDD" id="cd12151">
    <property type="entry name" value="F1-ATPase_gamma"/>
    <property type="match status" value="1"/>
</dbReference>
<dbReference type="FunFam" id="3.40.1380.10:FF:000012">
    <property type="entry name" value="ATP synthase gamma chain"/>
    <property type="match status" value="1"/>
</dbReference>
<dbReference type="Gene3D" id="3.40.1380.10">
    <property type="match status" value="1"/>
</dbReference>
<dbReference type="Gene3D" id="1.10.287.80">
    <property type="entry name" value="ATP synthase, gamma subunit, helix hairpin domain"/>
    <property type="match status" value="1"/>
</dbReference>
<dbReference type="HAMAP" id="MF_00815">
    <property type="entry name" value="ATP_synth_gamma_bact"/>
    <property type="match status" value="1"/>
</dbReference>
<dbReference type="InterPro" id="IPR035968">
    <property type="entry name" value="ATP_synth_F1_ATPase_gsu"/>
</dbReference>
<dbReference type="InterPro" id="IPR000131">
    <property type="entry name" value="ATP_synth_F1_gsu"/>
</dbReference>
<dbReference type="InterPro" id="IPR023632">
    <property type="entry name" value="ATP_synth_F1_gsu_CS"/>
</dbReference>
<dbReference type="NCBIfam" id="TIGR01146">
    <property type="entry name" value="ATPsyn_F1gamma"/>
    <property type="match status" value="1"/>
</dbReference>
<dbReference type="PANTHER" id="PTHR11693">
    <property type="entry name" value="ATP SYNTHASE GAMMA CHAIN"/>
    <property type="match status" value="1"/>
</dbReference>
<dbReference type="PANTHER" id="PTHR11693:SF22">
    <property type="entry name" value="ATP SYNTHASE SUBUNIT GAMMA, MITOCHONDRIAL"/>
    <property type="match status" value="1"/>
</dbReference>
<dbReference type="Pfam" id="PF00231">
    <property type="entry name" value="ATP-synt"/>
    <property type="match status" value="1"/>
</dbReference>
<dbReference type="PRINTS" id="PR00126">
    <property type="entry name" value="ATPASEGAMMA"/>
</dbReference>
<dbReference type="SUPFAM" id="SSF52943">
    <property type="entry name" value="ATP synthase (F1-ATPase), gamma subunit"/>
    <property type="match status" value="1"/>
</dbReference>
<dbReference type="PROSITE" id="PS00153">
    <property type="entry name" value="ATPASE_GAMMA"/>
    <property type="match status" value="1"/>
</dbReference>
<organism>
    <name type="scientific">Clostridium botulinum (strain Langeland / NCTC 10281 / Type F)</name>
    <dbReference type="NCBI Taxonomy" id="441772"/>
    <lineage>
        <taxon>Bacteria</taxon>
        <taxon>Bacillati</taxon>
        <taxon>Bacillota</taxon>
        <taxon>Clostridia</taxon>
        <taxon>Eubacteriales</taxon>
        <taxon>Clostridiaceae</taxon>
        <taxon>Clostridium</taxon>
    </lineage>
</organism>
<proteinExistence type="inferred from homology"/>
<accession>A7G9Q8</accession>
<gene>
    <name evidence="1" type="primary">atpG</name>
    <name type="ordered locus">CLI_0210</name>
</gene>
<comment type="function">
    <text evidence="1">Produces ATP from ADP in the presence of a proton gradient across the membrane. The gamma chain is believed to be important in regulating ATPase activity and the flow of protons through the CF(0) complex.</text>
</comment>
<comment type="subunit">
    <text evidence="1">F-type ATPases have 2 components, CF(1) - the catalytic core - and CF(0) - the membrane proton channel. CF(1) has five subunits: alpha(3), beta(3), gamma(1), delta(1), epsilon(1). CF(0) has three main subunits: a, b and c.</text>
</comment>
<comment type="subcellular location">
    <subcellularLocation>
        <location evidence="1">Cell membrane</location>
        <topology evidence="1">Peripheral membrane protein</topology>
    </subcellularLocation>
</comment>
<comment type="similarity">
    <text evidence="1">Belongs to the ATPase gamma chain family.</text>
</comment>
<reference key="1">
    <citation type="submission" date="2007-06" db="EMBL/GenBank/DDBJ databases">
        <authorList>
            <person name="Brinkac L.M."/>
            <person name="Daugherty S."/>
            <person name="Dodson R.J."/>
            <person name="Madupu R."/>
            <person name="Brown J.L."/>
            <person name="Bruce D."/>
            <person name="Detter C."/>
            <person name="Munk C."/>
            <person name="Smith L.A."/>
            <person name="Smith T.J."/>
            <person name="White O."/>
            <person name="Brettin T.S."/>
        </authorList>
    </citation>
    <scope>NUCLEOTIDE SEQUENCE [LARGE SCALE GENOMIC DNA]</scope>
    <source>
        <strain>Langeland / NCTC 10281 / Type F</strain>
    </source>
</reference>
<keyword id="KW-0066">ATP synthesis</keyword>
<keyword id="KW-1003">Cell membrane</keyword>
<keyword id="KW-0139">CF(1)</keyword>
<keyword id="KW-0375">Hydrogen ion transport</keyword>
<keyword id="KW-0406">Ion transport</keyword>
<keyword id="KW-0472">Membrane</keyword>
<keyword id="KW-0813">Transport</keyword>